<dbReference type="EC" id="6.3.4.3" evidence="1"/>
<dbReference type="EMBL" id="AE017262">
    <property type="protein sequence ID" value="AAT04675.1"/>
    <property type="molecule type" value="Genomic_DNA"/>
</dbReference>
<dbReference type="RefSeq" id="WP_003728274.1">
    <property type="nucleotide sequence ID" value="NC_002973.6"/>
</dbReference>
<dbReference type="SMR" id="Q71YD9"/>
<dbReference type="KEGG" id="lmf:LMOf2365_1906"/>
<dbReference type="HOGENOM" id="CLU_003601_3_3_9"/>
<dbReference type="UniPathway" id="UPA00193"/>
<dbReference type="GO" id="GO:0005524">
    <property type="term" value="F:ATP binding"/>
    <property type="evidence" value="ECO:0007669"/>
    <property type="project" value="UniProtKB-UniRule"/>
</dbReference>
<dbReference type="GO" id="GO:0004329">
    <property type="term" value="F:formate-tetrahydrofolate ligase activity"/>
    <property type="evidence" value="ECO:0007669"/>
    <property type="project" value="UniProtKB-UniRule"/>
</dbReference>
<dbReference type="GO" id="GO:0035999">
    <property type="term" value="P:tetrahydrofolate interconversion"/>
    <property type="evidence" value="ECO:0007669"/>
    <property type="project" value="UniProtKB-UniRule"/>
</dbReference>
<dbReference type="CDD" id="cd00477">
    <property type="entry name" value="FTHFS"/>
    <property type="match status" value="1"/>
</dbReference>
<dbReference type="FunFam" id="3.30.1510.10:FF:000001">
    <property type="entry name" value="Formate--tetrahydrofolate ligase"/>
    <property type="match status" value="1"/>
</dbReference>
<dbReference type="FunFam" id="3.10.410.10:FF:000001">
    <property type="entry name" value="Putative formate--tetrahydrofolate ligase"/>
    <property type="match status" value="1"/>
</dbReference>
<dbReference type="Gene3D" id="3.30.1510.10">
    <property type="entry name" value="Domain 2, N(10)-formyltetrahydrofolate synthetase"/>
    <property type="match status" value="1"/>
</dbReference>
<dbReference type="Gene3D" id="3.10.410.10">
    <property type="entry name" value="Formyltetrahydrofolate synthetase, domain 3"/>
    <property type="match status" value="1"/>
</dbReference>
<dbReference type="Gene3D" id="3.40.50.300">
    <property type="entry name" value="P-loop containing nucleotide triphosphate hydrolases"/>
    <property type="match status" value="1"/>
</dbReference>
<dbReference type="HAMAP" id="MF_01543">
    <property type="entry name" value="FTHFS"/>
    <property type="match status" value="1"/>
</dbReference>
<dbReference type="InterPro" id="IPR000559">
    <property type="entry name" value="Formate_THF_ligase"/>
</dbReference>
<dbReference type="InterPro" id="IPR020628">
    <property type="entry name" value="Formate_THF_ligase_CS"/>
</dbReference>
<dbReference type="InterPro" id="IPR027417">
    <property type="entry name" value="P-loop_NTPase"/>
</dbReference>
<dbReference type="NCBIfam" id="NF010030">
    <property type="entry name" value="PRK13505.1"/>
    <property type="match status" value="1"/>
</dbReference>
<dbReference type="Pfam" id="PF01268">
    <property type="entry name" value="FTHFS"/>
    <property type="match status" value="1"/>
</dbReference>
<dbReference type="SUPFAM" id="SSF52540">
    <property type="entry name" value="P-loop containing nucleoside triphosphate hydrolases"/>
    <property type="match status" value="1"/>
</dbReference>
<dbReference type="PROSITE" id="PS00721">
    <property type="entry name" value="FTHFS_1"/>
    <property type="match status" value="1"/>
</dbReference>
<dbReference type="PROSITE" id="PS00722">
    <property type="entry name" value="FTHFS_2"/>
    <property type="match status" value="1"/>
</dbReference>
<keyword id="KW-0067">ATP-binding</keyword>
<keyword id="KW-0436">Ligase</keyword>
<keyword id="KW-0547">Nucleotide-binding</keyword>
<keyword id="KW-0554">One-carbon metabolism</keyword>
<accession>Q71YD9</accession>
<protein>
    <recommendedName>
        <fullName evidence="1">Formate--tetrahydrofolate ligase</fullName>
        <ecNumber evidence="1">6.3.4.3</ecNumber>
    </recommendedName>
    <alternativeName>
        <fullName evidence="1">Formyltetrahydrofolate synthetase</fullName>
        <shortName evidence="1">FHS</shortName>
        <shortName evidence="1">FTHFS</shortName>
    </alternativeName>
</protein>
<reference key="1">
    <citation type="journal article" date="2004" name="Nucleic Acids Res.">
        <title>Whole genome comparisons of serotype 4b and 1/2a strains of the food-borne pathogen Listeria monocytogenes reveal new insights into the core genome components of this species.</title>
        <authorList>
            <person name="Nelson K.E."/>
            <person name="Fouts D.E."/>
            <person name="Mongodin E.F."/>
            <person name="Ravel J."/>
            <person name="DeBoy R.T."/>
            <person name="Kolonay J.F."/>
            <person name="Rasko D.A."/>
            <person name="Angiuoli S.V."/>
            <person name="Gill S.R."/>
            <person name="Paulsen I.T."/>
            <person name="Peterson J.D."/>
            <person name="White O."/>
            <person name="Nelson W.C."/>
            <person name="Nierman W.C."/>
            <person name="Beanan M.J."/>
            <person name="Brinkac L.M."/>
            <person name="Daugherty S.C."/>
            <person name="Dodson R.J."/>
            <person name="Durkin A.S."/>
            <person name="Madupu R."/>
            <person name="Haft D.H."/>
            <person name="Selengut J."/>
            <person name="Van Aken S.E."/>
            <person name="Khouri H.M."/>
            <person name="Fedorova N."/>
            <person name="Forberger H.A."/>
            <person name="Tran B."/>
            <person name="Kathariou S."/>
            <person name="Wonderling L.D."/>
            <person name="Uhlich G.A."/>
            <person name="Bayles D.O."/>
            <person name="Luchansky J.B."/>
            <person name="Fraser C.M."/>
        </authorList>
    </citation>
    <scope>NUCLEOTIDE SEQUENCE [LARGE SCALE GENOMIC DNA]</scope>
    <source>
        <strain>F2365</strain>
    </source>
</reference>
<gene>
    <name evidence="1" type="primary">fhs</name>
    <name type="ordered locus">LMOf2365_1906</name>
</gene>
<organism>
    <name type="scientific">Listeria monocytogenes serotype 4b (strain F2365)</name>
    <dbReference type="NCBI Taxonomy" id="265669"/>
    <lineage>
        <taxon>Bacteria</taxon>
        <taxon>Bacillati</taxon>
        <taxon>Bacillota</taxon>
        <taxon>Bacilli</taxon>
        <taxon>Bacillales</taxon>
        <taxon>Listeriaceae</taxon>
        <taxon>Listeria</taxon>
    </lineage>
</organism>
<evidence type="ECO:0000255" key="1">
    <source>
        <dbReference type="HAMAP-Rule" id="MF_01543"/>
    </source>
</evidence>
<feature type="chain" id="PRO_0000199358" description="Formate--tetrahydrofolate ligase">
    <location>
        <begin position="1"/>
        <end position="560"/>
    </location>
</feature>
<feature type="binding site" evidence="1">
    <location>
        <begin position="69"/>
        <end position="76"/>
    </location>
    <ligand>
        <name>ATP</name>
        <dbReference type="ChEBI" id="CHEBI:30616"/>
    </ligand>
</feature>
<proteinExistence type="inferred from homology"/>
<name>FTHS_LISMF</name>
<sequence>MSNKVKSDIEIASKAEILPVTTIAEHLGLDADALELYGKYKAKLSYDTIHSLKDKEPGKLVLVTAINPTPAGEGKSTVTVGLGDALSKKDKKTVIALREPSLGPTMGIKGGATGGGYAQVIPMEDINLHFTGDFHAITAANNALSAFIDNHMQQGNDLDIDGRRIVWKRVVDLNDRALRKVVVGLGGPIQGVPREDGFDITVASEIMAIICLASDLKDLKKRLSEIVIGYNYKKEPITVGEMGYEGALTLLLKDALKPNLVQTLEHTPAIVHGGPFANIAHGCNSVSATSTALRLGEYVVTEAGFGADLGAEKFLDIKVPALGKAPDCVVIVATIRALKMHGGALKTELSEENVDALAKGFTNLQKHTESIQTFGIPYVVAINKFITDSDAEVAKLEALCEEHGIPFSLTEVWEKGGDGGLELADKVIAAVESGEADYKRIYDDAWSIEEKLEAIVTKVYGGIGVELSSKAQKQIVEFKKYGWDRYPICMAKTQYSLSDDPTLLGRPTDFVIHIREFIPKLGAGFVVALTGDVMTMPGLPKKPAALNMDVDENGNAQGLF</sequence>
<comment type="catalytic activity">
    <reaction evidence="1">
        <text>(6S)-5,6,7,8-tetrahydrofolate + formate + ATP = (6R)-10-formyltetrahydrofolate + ADP + phosphate</text>
        <dbReference type="Rhea" id="RHEA:20221"/>
        <dbReference type="ChEBI" id="CHEBI:15740"/>
        <dbReference type="ChEBI" id="CHEBI:30616"/>
        <dbReference type="ChEBI" id="CHEBI:43474"/>
        <dbReference type="ChEBI" id="CHEBI:57453"/>
        <dbReference type="ChEBI" id="CHEBI:195366"/>
        <dbReference type="ChEBI" id="CHEBI:456216"/>
        <dbReference type="EC" id="6.3.4.3"/>
    </reaction>
</comment>
<comment type="pathway">
    <text evidence="1">One-carbon metabolism; tetrahydrofolate interconversion.</text>
</comment>
<comment type="similarity">
    <text evidence="1">Belongs to the formate--tetrahydrofolate ligase family.</text>
</comment>